<organism>
    <name type="scientific">Mus musculus</name>
    <name type="common">Mouse</name>
    <dbReference type="NCBI Taxonomy" id="10090"/>
    <lineage>
        <taxon>Eukaryota</taxon>
        <taxon>Metazoa</taxon>
        <taxon>Chordata</taxon>
        <taxon>Craniata</taxon>
        <taxon>Vertebrata</taxon>
        <taxon>Euteleostomi</taxon>
        <taxon>Mammalia</taxon>
        <taxon>Eutheria</taxon>
        <taxon>Euarchontoglires</taxon>
        <taxon>Glires</taxon>
        <taxon>Rodentia</taxon>
        <taxon>Myomorpha</taxon>
        <taxon>Muroidea</taxon>
        <taxon>Muridae</taxon>
        <taxon>Murinae</taxon>
        <taxon>Mus</taxon>
        <taxon>Mus</taxon>
    </lineage>
</organism>
<proteinExistence type="evidence at protein level"/>
<dbReference type="EMBL" id="U76389">
    <property type="protein sequence ID" value="AAB53204.1"/>
    <property type="molecule type" value="mRNA"/>
</dbReference>
<dbReference type="EMBL" id="AF076186">
    <property type="protein sequence ID" value="AAC32268.1"/>
    <property type="molecule type" value="mRNA"/>
</dbReference>
<dbReference type="EMBL" id="AF076187">
    <property type="protein sequence ID" value="AAC32269.1"/>
    <property type="molecule type" value="mRNA"/>
</dbReference>
<dbReference type="EMBL" id="CH466545">
    <property type="protein sequence ID" value="EDL29374.1"/>
    <property type="molecule type" value="Genomic_DNA"/>
</dbReference>
<dbReference type="EMBL" id="BC111467">
    <property type="protein sequence ID" value="AAI11468.1"/>
    <property type="molecule type" value="mRNA"/>
</dbReference>
<dbReference type="CCDS" id="CCDS37091.1"/>
<dbReference type="RefSeq" id="NP_033401.2">
    <property type="nucleotide sequence ID" value="NM_009375.2"/>
</dbReference>
<dbReference type="SMR" id="O08710"/>
<dbReference type="BioGRID" id="204170">
    <property type="interactions" value="3"/>
</dbReference>
<dbReference type="FunCoup" id="O08710">
    <property type="interactions" value="80"/>
</dbReference>
<dbReference type="IntAct" id="O08710">
    <property type="interactions" value="1"/>
</dbReference>
<dbReference type="STRING" id="10090.ENSMUSP00000070239"/>
<dbReference type="ESTHER" id="mouse-thyro">
    <property type="family name" value="Thyroglobulin"/>
</dbReference>
<dbReference type="MEROPS" id="I31.950"/>
<dbReference type="MEROPS" id="S09.978"/>
<dbReference type="GlyCosmos" id="O08710">
    <property type="glycosylation" value="20 sites, No reported glycans"/>
</dbReference>
<dbReference type="GlyGen" id="O08710">
    <property type="glycosylation" value="20 sites"/>
</dbReference>
<dbReference type="iPTMnet" id="O08710"/>
<dbReference type="PhosphoSitePlus" id="O08710"/>
<dbReference type="CPTAC" id="non-CPTAC-3953"/>
<dbReference type="PaxDb" id="10090-ENSMUSP00000070239"/>
<dbReference type="ProteomicsDB" id="262987"/>
<dbReference type="ABCD" id="O08710">
    <property type="antibodies" value="5 sequenced antibodies"/>
</dbReference>
<dbReference type="Antibodypedia" id="860">
    <property type="antibodies" value="2013 antibodies from 43 providers"/>
</dbReference>
<dbReference type="DNASU" id="21819"/>
<dbReference type="Ensembl" id="ENSMUST00000065916.14">
    <property type="protein sequence ID" value="ENSMUSP00000070239.8"/>
    <property type="gene ID" value="ENSMUSG00000053469.15"/>
</dbReference>
<dbReference type="GeneID" id="21819"/>
<dbReference type="KEGG" id="mmu:21819"/>
<dbReference type="UCSC" id="uc007wap.1">
    <property type="organism name" value="mouse"/>
</dbReference>
<dbReference type="AGR" id="MGI:98733"/>
<dbReference type="CTD" id="7038"/>
<dbReference type="MGI" id="MGI:98733">
    <property type="gene designation" value="Tg"/>
</dbReference>
<dbReference type="VEuPathDB" id="HostDB:ENSMUSG00000053469"/>
<dbReference type="eggNOG" id="KOG1214">
    <property type="taxonomic scope" value="Eukaryota"/>
</dbReference>
<dbReference type="GeneTree" id="ENSGT00940000159300"/>
<dbReference type="HOGENOM" id="CLU_000943_0_0_1"/>
<dbReference type="InParanoid" id="O08710"/>
<dbReference type="OMA" id="SIYVPQC"/>
<dbReference type="OrthoDB" id="6409105at2759"/>
<dbReference type="TreeFam" id="TF351833"/>
<dbReference type="BioGRID-ORCS" id="21819">
    <property type="hits" value="1 hit in 79 CRISPR screens"/>
</dbReference>
<dbReference type="ChiTaRS" id="Tg">
    <property type="organism name" value="mouse"/>
</dbReference>
<dbReference type="PRO" id="PR:O08710"/>
<dbReference type="Proteomes" id="UP000000589">
    <property type="component" value="Chromosome 15"/>
</dbReference>
<dbReference type="RNAct" id="O08710">
    <property type="molecule type" value="protein"/>
</dbReference>
<dbReference type="Bgee" id="ENSMUSG00000053469">
    <property type="expression patterns" value="Expressed in trachea and 37 other cell types or tissues"/>
</dbReference>
<dbReference type="ExpressionAtlas" id="O08710">
    <property type="expression patterns" value="baseline and differential"/>
</dbReference>
<dbReference type="GO" id="GO:0005615">
    <property type="term" value="C:extracellular space"/>
    <property type="evidence" value="ECO:0000314"/>
    <property type="project" value="MGI"/>
</dbReference>
<dbReference type="GO" id="GO:0005179">
    <property type="term" value="F:hormone activity"/>
    <property type="evidence" value="ECO:0007669"/>
    <property type="project" value="UniProtKB-KW"/>
</dbReference>
<dbReference type="GO" id="GO:0042802">
    <property type="term" value="F:identical protein binding"/>
    <property type="evidence" value="ECO:0000314"/>
    <property type="project" value="UniProtKB"/>
</dbReference>
<dbReference type="GO" id="GO:0042446">
    <property type="term" value="P:hormone biosynthetic process"/>
    <property type="evidence" value="ECO:0007669"/>
    <property type="project" value="UniProtKB-KW"/>
</dbReference>
<dbReference type="GO" id="GO:0015705">
    <property type="term" value="P:iodide transport"/>
    <property type="evidence" value="ECO:0000315"/>
    <property type="project" value="MGI"/>
</dbReference>
<dbReference type="GO" id="GO:0031641">
    <property type="term" value="P:regulation of myelination"/>
    <property type="evidence" value="ECO:0000315"/>
    <property type="project" value="MGI"/>
</dbReference>
<dbReference type="GO" id="GO:0030878">
    <property type="term" value="P:thyroid gland development"/>
    <property type="evidence" value="ECO:0007669"/>
    <property type="project" value="Ensembl"/>
</dbReference>
<dbReference type="GO" id="GO:0006590">
    <property type="term" value="P:thyroid hormone generation"/>
    <property type="evidence" value="ECO:0000314"/>
    <property type="project" value="UniProtKB"/>
</dbReference>
<dbReference type="GO" id="GO:0042403">
    <property type="term" value="P:thyroid hormone metabolic process"/>
    <property type="evidence" value="ECO:0000315"/>
    <property type="project" value="MGI"/>
</dbReference>
<dbReference type="CDD" id="cd00191">
    <property type="entry name" value="TY"/>
    <property type="match status" value="7"/>
</dbReference>
<dbReference type="FunFam" id="4.10.800.10:FF:000004">
    <property type="entry name" value="SPARC-related modular calcium-binding protein 1"/>
    <property type="match status" value="1"/>
</dbReference>
<dbReference type="FunFam" id="2.10.50.10:FF:000047">
    <property type="entry name" value="Thyroglobulin"/>
    <property type="match status" value="1"/>
</dbReference>
<dbReference type="FunFam" id="3.40.50.1820:FF:000127">
    <property type="entry name" value="Thyroglobulin"/>
    <property type="match status" value="1"/>
</dbReference>
<dbReference type="FunFam" id="4.10.800.10:FF:000011">
    <property type="entry name" value="Thyroglobulin"/>
    <property type="match status" value="2"/>
</dbReference>
<dbReference type="FunFam" id="4.10.800.10:FF:000012">
    <property type="entry name" value="Thyroglobulin"/>
    <property type="match status" value="1"/>
</dbReference>
<dbReference type="FunFam" id="4.10.800.10:FF:000013">
    <property type="entry name" value="Thyroglobulin"/>
    <property type="match status" value="1"/>
</dbReference>
<dbReference type="FunFam" id="4.10.800.10:FF:000016">
    <property type="entry name" value="Thyroglobulin"/>
    <property type="match status" value="1"/>
</dbReference>
<dbReference type="Gene3D" id="3.40.50.1820">
    <property type="entry name" value="alpha/beta hydrolase"/>
    <property type="match status" value="1"/>
</dbReference>
<dbReference type="Gene3D" id="4.10.800.10">
    <property type="entry name" value="Thyroglobulin type-1"/>
    <property type="match status" value="10"/>
</dbReference>
<dbReference type="Gene3D" id="2.10.50.10">
    <property type="entry name" value="Tumor Necrosis Factor Receptor, subunit A, domain 2"/>
    <property type="match status" value="1"/>
</dbReference>
<dbReference type="InterPro" id="IPR029058">
    <property type="entry name" value="AB_hydrolase_fold"/>
</dbReference>
<dbReference type="InterPro" id="IPR002018">
    <property type="entry name" value="CarbesteraseB"/>
</dbReference>
<dbReference type="InterPro" id="IPR019819">
    <property type="entry name" value="Carboxylesterase_B_CS"/>
</dbReference>
<dbReference type="InterPro" id="IPR052001">
    <property type="entry name" value="MHC-II_Gamma/Thyroglobulin"/>
</dbReference>
<dbReference type="InterPro" id="IPR016324">
    <property type="entry name" value="Thyroglobulin"/>
</dbReference>
<dbReference type="InterPro" id="IPR000716">
    <property type="entry name" value="Thyroglobulin_1"/>
</dbReference>
<dbReference type="InterPro" id="IPR036857">
    <property type="entry name" value="Thyroglobulin_1_sf"/>
</dbReference>
<dbReference type="InterPro" id="IPR011641">
    <property type="entry name" value="Tyr-kin_ephrin_A/B_rcpt-like"/>
</dbReference>
<dbReference type="PANTHER" id="PTHR14093">
    <property type="entry name" value="HLA CLASS II GAMMA CHAIN"/>
    <property type="match status" value="1"/>
</dbReference>
<dbReference type="PANTHER" id="PTHR14093:SF19">
    <property type="entry name" value="THYROGLOBULIN"/>
    <property type="match status" value="1"/>
</dbReference>
<dbReference type="Pfam" id="PF00135">
    <property type="entry name" value="COesterase"/>
    <property type="match status" value="1"/>
</dbReference>
<dbReference type="Pfam" id="PF07699">
    <property type="entry name" value="Ephrin_rec_like"/>
    <property type="match status" value="1"/>
</dbReference>
<dbReference type="Pfam" id="PF00086">
    <property type="entry name" value="Thyroglobulin_1"/>
    <property type="match status" value="11"/>
</dbReference>
<dbReference type="PIRSF" id="PIRSF001831">
    <property type="entry name" value="Thyroglobulin"/>
    <property type="match status" value="1"/>
</dbReference>
<dbReference type="SMART" id="SM01411">
    <property type="entry name" value="Ephrin_rec_like"/>
    <property type="match status" value="1"/>
</dbReference>
<dbReference type="SMART" id="SM00211">
    <property type="entry name" value="TY"/>
    <property type="match status" value="10"/>
</dbReference>
<dbReference type="SUPFAM" id="SSF53474">
    <property type="entry name" value="alpha/beta-Hydrolases"/>
    <property type="match status" value="1"/>
</dbReference>
<dbReference type="SUPFAM" id="SSF57610">
    <property type="entry name" value="Thyroglobulin type-1 domain"/>
    <property type="match status" value="11"/>
</dbReference>
<dbReference type="PROSITE" id="PS00941">
    <property type="entry name" value="CARBOXYLESTERASE_B_2"/>
    <property type="match status" value="1"/>
</dbReference>
<dbReference type="PROSITE" id="PS00484">
    <property type="entry name" value="THYROGLOBULIN_1_1"/>
    <property type="match status" value="9"/>
</dbReference>
<dbReference type="PROSITE" id="PS51162">
    <property type="entry name" value="THYROGLOBULIN_1_2"/>
    <property type="match status" value="11"/>
</dbReference>
<accession>O08710</accession>
<accession>O88590</accession>
<accession>Q2NKY1</accession>
<accession>Q9QWY7</accession>
<comment type="function">
    <text evidence="1 2 11">Acts as a substrate for the production of iodinated thyroid hormones thyroxine (T4) and triiodothyronine (T3) (By similarity). The synthesis of T3 and T4 involves iodination of selected tyrosine residues of TG/thyroglobulin followed by their oxidative coupling (By similarity). Following TG re-internalization and lysosomal-mediated proteolysis, T3 and T4 are released from the polypeptide backbone leading to their secretion into the bloodstream (Probable). One dimer produces 7 thyroid hormone molecules (By similarity).</text>
</comment>
<comment type="subunit">
    <text evidence="2 6 7">Monomer (PubMed:12782676). Homodimer (via ChEL region); occurs in the endoplasmic reticulum and is required for export to the Golgi apparatus (PubMed:12782676, PubMed:19276074). Homooligomer; disulfide-linked; stored in this form in the thyroid follicle lumen (By similarity).</text>
</comment>
<comment type="subcellular location">
    <subcellularLocation>
        <location evidence="6 7">Secreted</location>
    </subcellularLocation>
    <text evidence="6">Secreted into the thyroid follicle lumen (PubMed:12782676). Localizes to colloid globules, a structure formed in the thyroid follicle lumen consisting of cross-linked TG arranged in concentric layers (PubMed:12782676).</text>
</comment>
<comment type="tissue specificity">
    <text evidence="6">Specifically expressed in the thyroid gland.</text>
</comment>
<comment type="domain">
    <text evidence="7">The cholinesterase-like (ChEL) region is required for dimerization and export from the endoplasmic reticulum.</text>
</comment>
<comment type="PTM">
    <text evidence="1 2">Iodinated on tyrosine residues by TPO (By similarity). There are 4 pairs of iodinated tyrosines used for coupling: acceptor Tyr-25 is coupled to donor Tyr-150 or Tyr-235, acceptor Tyr-2572 is coupled to donor Tyr-2539, acceptor Tyr-2764 in monomer 1 is coupled to donor Tyr-2764 in monomer 2 and acceptor Tyr-1310 in monomer 1 is coupled to donor Tyr-109 in monomer 2 (By similarity).</text>
</comment>
<comment type="PTM">
    <text evidence="2">Sulfated tyrosines are desulfated during iodination.</text>
</comment>
<comment type="PTM">
    <text evidence="6 11">Undergoes sequential proteolysis by cathepsins to release thyroxine (T4) and triiodothyronine (T3) hormones (PubMed:12782676). In the thyroid follicle lumen, cross-linked TG (storage form) is solubilized by limited proteolysis mediated by cathepsins CTSB and/or CTSL (PubMed:12782676). Partially cleaved TG is further processed by CTSK/cathepsin K and/or CTSL resulting in the release of T4 (PubMed:12782676). Following endocytosis, further processing occurs leading to the release of T3 and more T4 hormones (Probable).</text>
</comment>
<comment type="disease">
    <text evidence="8">Congenital goiter (cog) is caused by a hypertrophy of the thyroid gland (goiter). Mice have reduced growth rate, hypothyroidism due to reduced production of the thyroid hormones thyroxine (T4) and triiodothyronine (T3), and lack colloid globules, a structure in the thyroid follicle lumen that is enriched in Tg/thyroglobulin.</text>
</comment>
<comment type="similarity">
    <text evidence="10">Belongs to the type-B carboxylesterase/lipase family.</text>
</comment>
<comment type="caution">
    <text evidence="10">The cholinesterase-like (ChEL) region lacks the Ser residue of the catalytic triad suggesting that it has no esterase activity.</text>
</comment>
<feature type="signal peptide" evidence="1">
    <location>
        <begin position="1"/>
        <end position="20"/>
    </location>
</feature>
<feature type="chain" id="PRO_0000008637" description="Thyroglobulin">
    <location>
        <begin position="21"/>
        <end position="2766"/>
    </location>
</feature>
<feature type="domain" description="Thyroglobulin type-1 1" evidence="4">
    <location>
        <begin position="32"/>
        <end position="93"/>
    </location>
</feature>
<feature type="domain" description="Thyroglobulin type-1 2" evidence="4">
    <location>
        <begin position="94"/>
        <end position="161"/>
    </location>
</feature>
<feature type="domain" description="Thyroglobulin type-1 3" evidence="4">
    <location>
        <begin position="162"/>
        <end position="298"/>
    </location>
</feature>
<feature type="domain" description="Thyroglobulin type-1 4" evidence="4">
    <location>
        <begin position="299"/>
        <end position="359"/>
    </location>
</feature>
<feature type="domain" description="Thyroglobulin type-1 5" evidence="4">
    <location>
        <begin position="605"/>
        <end position="658"/>
    </location>
</feature>
<feature type="domain" description="Thyroglobulin type-1 6" evidence="4">
    <location>
        <begin position="659"/>
        <end position="726"/>
    </location>
</feature>
<feature type="domain" description="Thyroglobulin type-1 7" evidence="4">
    <location>
        <begin position="727"/>
        <end position="922"/>
    </location>
</feature>
<feature type="domain" description="Thyroglobulin type-1 8" evidence="4">
    <location>
        <begin position="923"/>
        <end position="1074"/>
    </location>
</feature>
<feature type="domain" description="Thyroglobulin type-1 9" evidence="4">
    <location>
        <begin position="1075"/>
        <end position="1146"/>
    </location>
</feature>
<feature type="domain" description="Thyroglobulin type-1 10" evidence="4">
    <location>
        <begin position="1147"/>
        <end position="1211"/>
    </location>
</feature>
<feature type="repeat" description="Type II" evidence="2">
    <location>
        <begin position="1455"/>
        <end position="1468"/>
    </location>
</feature>
<feature type="repeat" description="Type II" evidence="2">
    <location>
        <begin position="1469"/>
        <end position="1485"/>
    </location>
</feature>
<feature type="repeat" description="Type II" evidence="2">
    <location>
        <begin position="1486"/>
        <end position="1502"/>
    </location>
</feature>
<feature type="domain" description="Thyroglobulin type-1 11" evidence="4">
    <location>
        <begin position="1510"/>
        <end position="1564"/>
    </location>
</feature>
<feature type="repeat" description="Type IIIA" evidence="2">
    <location>
        <begin position="1602"/>
        <end position="1722"/>
    </location>
</feature>
<feature type="repeat" description="Type IIIB" evidence="2">
    <location>
        <begin position="1723"/>
        <end position="1889"/>
    </location>
</feature>
<feature type="repeat" description="Type IIIA" evidence="2">
    <location>
        <begin position="1890"/>
        <end position="1992"/>
    </location>
</feature>
<feature type="repeat" description="Type IIIB" evidence="2">
    <location>
        <begin position="1993"/>
        <end position="2125"/>
    </location>
</feature>
<feature type="repeat" description="Type IIIA" evidence="2">
    <location>
        <begin position="2126"/>
        <end position="2183"/>
    </location>
</feature>
<feature type="region of interest" description="Cholinesterase-like (ChEL)" evidence="12">
    <location>
        <begin position="2186"/>
        <end position="2766"/>
    </location>
</feature>
<feature type="region of interest" description="Disordered" evidence="5">
    <location>
        <begin position="2729"/>
        <end position="2766"/>
    </location>
</feature>
<feature type="compositionally biased region" description="Acidic residues" evidence="5">
    <location>
        <begin position="2739"/>
        <end position="2753"/>
    </location>
</feature>
<feature type="modified residue" description="Iodotyrosine; alternate" evidence="2">
    <location>
        <position position="25"/>
    </location>
</feature>
<feature type="modified residue" description="Sulfotyrosine; alternate" evidence="1">
    <location>
        <position position="25"/>
    </location>
</feature>
<feature type="modified residue" description="Thyroxine; alternate" evidence="2">
    <location>
        <position position="25"/>
    </location>
</feature>
<feature type="modified residue" description="Triiodothyronine; alternate" evidence="2">
    <location>
        <position position="25"/>
    </location>
</feature>
<feature type="modified residue" description="Iodotyrosine" evidence="2">
    <location>
        <position position="109"/>
    </location>
</feature>
<feature type="modified residue" description="Diiodotyrosine; alternate" evidence="2">
    <location>
        <position position="150"/>
    </location>
</feature>
<feature type="modified residue" description="Iodotyrosine; alternate" evidence="2">
    <location>
        <position position="150"/>
    </location>
</feature>
<feature type="modified residue" description="Iodotyrosine" evidence="2">
    <location>
        <position position="235"/>
    </location>
</feature>
<feature type="modified residue" description="Iodotyrosine" evidence="2">
    <location>
        <position position="259"/>
    </location>
</feature>
<feature type="modified residue" description="Diiodotyrosine; alternate" evidence="2">
    <location>
        <position position="704"/>
    </location>
</feature>
<feature type="modified residue" description="Iodotyrosine; alternate" evidence="2">
    <location>
        <position position="704"/>
    </location>
</feature>
<feature type="modified residue" description="Thyroxine; alternate" evidence="2">
    <location>
        <position position="704"/>
    </location>
</feature>
<feature type="modified residue" description="Triiodothyronine; alternate" evidence="2">
    <location>
        <position position="704"/>
    </location>
</feature>
<feature type="modified residue" description="Iodotyrosine" evidence="2">
    <location>
        <position position="785"/>
    </location>
</feature>
<feature type="modified residue" description="Diiodotyrosine; alternate" evidence="2">
    <location>
        <position position="867"/>
    </location>
</feature>
<feature type="modified residue" description="Iodotyrosine; alternate" evidence="2">
    <location>
        <position position="867"/>
    </location>
</feature>
<feature type="modified residue" description="Diiodotyrosine" evidence="2">
    <location>
        <position position="884"/>
    </location>
</feature>
<feature type="modified residue" description="Diiodotyrosine; alternate" evidence="2">
    <location>
        <position position="993"/>
    </location>
</feature>
<feature type="modified residue" description="Iodotyrosine; alternate" evidence="2">
    <location>
        <position position="993"/>
    </location>
</feature>
<feature type="modified residue" description="Iodotyrosine" evidence="2">
    <location>
        <position position="1310"/>
    </location>
</feature>
<feature type="modified residue" description="Thyroxine" evidence="2">
    <location>
        <position position="1310"/>
    </location>
</feature>
<feature type="modified residue" description="Iodotyrosine" evidence="2">
    <location>
        <position position="2182"/>
    </location>
</feature>
<feature type="modified residue" description="Thyroxine" evidence="2">
    <location>
        <position position="2539"/>
    </location>
</feature>
<feature type="modified residue" description="Diiodotyrosine; alternate" evidence="2">
    <location>
        <position position="2572"/>
    </location>
</feature>
<feature type="modified residue" description="Iodotyrosine; alternate" evidence="2">
    <location>
        <position position="2572"/>
    </location>
</feature>
<feature type="modified residue" description="Thyroxine; alternate" evidence="2">
    <location>
        <position position="2572"/>
    </location>
</feature>
<feature type="modified residue" description="Triiodothyronine; alternate" evidence="2">
    <location>
        <position position="2572"/>
    </location>
</feature>
<feature type="modified residue" description="Iodotyrosine" evidence="2">
    <location>
        <position position="2586"/>
    </location>
</feature>
<feature type="modified residue" description="Iodotyrosine" evidence="2">
    <location>
        <position position="2616"/>
    </location>
</feature>
<feature type="modified residue" description="Diiodotyrosine" evidence="2">
    <location>
        <position position="2696"/>
    </location>
</feature>
<feature type="modified residue" description="Diiodotyrosine; alternate" evidence="2">
    <location>
        <position position="2764"/>
    </location>
</feature>
<feature type="modified residue" description="Iodotyrosine; alternate" evidence="2">
    <location>
        <position position="2764"/>
    </location>
</feature>
<feature type="modified residue" description="Thyroxine; alternate" evidence="2">
    <location>
        <position position="2764"/>
    </location>
</feature>
<feature type="modified residue" description="Triiodothyronine; alternate" evidence="2">
    <location>
        <position position="2764"/>
    </location>
</feature>
<feature type="glycosylation site" description="N-linked (GlcNAc...) asparagine" evidence="3">
    <location>
        <position position="111"/>
    </location>
</feature>
<feature type="glycosylation site" description="N-linked (GlcNAc...) asparagine" evidence="3">
    <location>
        <position position="199"/>
    </location>
</feature>
<feature type="glycosylation site" description="N-linked (GlcNAc...) asparagine" evidence="3">
    <location>
        <position position="484"/>
    </location>
</feature>
<feature type="glycosylation site" description="N-linked (GlcNAc...) asparagine" evidence="3">
    <location>
        <position position="496"/>
    </location>
</feature>
<feature type="glycosylation site" description="N-linked (GlcNAc...) asparagine" evidence="3">
    <location>
        <position position="748"/>
    </location>
</feature>
<feature type="glycosylation site" description="N-linked (GlcNAc...) asparagine" evidence="3">
    <location>
        <position position="817"/>
    </location>
</feature>
<feature type="glycosylation site" description="N-linked (GlcNAc...) asparagine" evidence="3">
    <location>
        <position position="948"/>
    </location>
</feature>
<feature type="glycosylation site" description="N-linked (GlcNAc...) asparagine" evidence="3">
    <location>
        <position position="1141"/>
    </location>
</feature>
<feature type="glycosylation site" description="N-linked (GlcNAc...) asparagine" evidence="3">
    <location>
        <position position="1349"/>
    </location>
</feature>
<feature type="glycosylation site" description="N-linked (GlcNAc...) asparagine" evidence="3">
    <location>
        <position position="1365"/>
    </location>
</feature>
<feature type="glycosylation site" description="N-linked (GlcNAc...) asparagine" evidence="3">
    <location>
        <position position="1715"/>
    </location>
</feature>
<feature type="glycosylation site" description="N-linked (GlcNAc...) asparagine" evidence="3">
    <location>
        <position position="1729"/>
    </location>
</feature>
<feature type="glycosylation site" description="N-linked (GlcNAc...) asparagine" evidence="3">
    <location>
        <position position="1773"/>
    </location>
</feature>
<feature type="glycosylation site" description="N-linked (GlcNAc...) asparagine" evidence="3">
    <location>
        <position position="1864"/>
    </location>
</feature>
<feature type="glycosylation site" description="N-linked (GlcNAc...) asparagine" evidence="3">
    <location>
        <position position="1935"/>
    </location>
</feature>
<feature type="glycosylation site" description="N-linked (GlcNAc...) asparagine" evidence="3">
    <location>
        <position position="2010"/>
    </location>
</feature>
<feature type="glycosylation site" description="N-linked (GlcNAc...) asparagine" evidence="3">
    <location>
        <position position="2120"/>
    </location>
</feature>
<feature type="glycosylation site" description="N-linked (GlcNAc...) asparagine" evidence="3">
    <location>
        <position position="2249"/>
    </location>
</feature>
<feature type="glycosylation site" description="N-linked (GlcNAc...) asparagine" evidence="3">
    <location>
        <position position="2294"/>
    </location>
</feature>
<feature type="glycosylation site" description="N-linked (GlcNAc...) asparagine" evidence="3">
    <location>
        <position position="2581"/>
    </location>
</feature>
<feature type="disulfide bond" evidence="4">
    <location>
        <begin position="35"/>
        <end position="53"/>
    </location>
</feature>
<feature type="disulfide bond" evidence="4">
    <location>
        <begin position="64"/>
        <end position="71"/>
    </location>
</feature>
<feature type="disulfide bond" evidence="4">
    <location>
        <begin position="73"/>
        <end position="93"/>
    </location>
</feature>
<feature type="disulfide bond" evidence="4">
    <location>
        <begin position="97"/>
        <end position="121"/>
    </location>
</feature>
<feature type="disulfide bond" evidence="4">
    <location>
        <begin position="132"/>
        <end position="139"/>
    </location>
</feature>
<feature type="disulfide bond" evidence="4">
    <location>
        <begin position="141"/>
        <end position="161"/>
    </location>
</feature>
<feature type="disulfide bond" evidence="4">
    <location>
        <begin position="165"/>
        <end position="184"/>
    </location>
</feature>
<feature type="disulfide bond" evidence="4">
    <location>
        <begin position="195"/>
        <end position="236"/>
    </location>
</feature>
<feature type="disulfide bond" evidence="4">
    <location>
        <begin position="302"/>
        <end position="320"/>
    </location>
</feature>
<feature type="disulfide bond" evidence="4">
    <location>
        <begin position="331"/>
        <end position="337"/>
    </location>
</feature>
<feature type="disulfide bond" evidence="4">
    <location>
        <begin position="339"/>
        <end position="359"/>
    </location>
</feature>
<feature type="disulfide bond" evidence="2">
    <location>
        <begin position="365"/>
        <end position="620"/>
    </location>
</feature>
<feature type="disulfide bond" evidence="2">
    <location>
        <begin position="408"/>
        <end position="608"/>
    </location>
</feature>
<feature type="disulfide bond" evidence="4">
    <location>
        <begin position="631"/>
        <end position="636"/>
    </location>
</feature>
<feature type="disulfide bond" evidence="4">
    <location>
        <begin position="638"/>
        <end position="658"/>
    </location>
</feature>
<feature type="disulfide bond" evidence="4">
    <location>
        <begin position="662"/>
        <end position="687"/>
    </location>
</feature>
<feature type="disulfide bond" evidence="4">
    <location>
        <begin position="698"/>
        <end position="703"/>
    </location>
</feature>
<feature type="disulfide bond" evidence="4">
    <location>
        <begin position="705"/>
        <end position="726"/>
    </location>
</feature>
<feature type="disulfide bond" evidence="4">
    <location>
        <begin position="730"/>
        <end position="763"/>
    </location>
</feature>
<feature type="disulfide bond" evidence="4">
    <location>
        <begin position="774"/>
        <end position="899"/>
    </location>
</feature>
<feature type="disulfide bond" evidence="4">
    <location>
        <begin position="901"/>
        <end position="922"/>
    </location>
</feature>
<feature type="disulfide bond" evidence="2">
    <location>
        <begin position="926"/>
        <end position="1032"/>
    </location>
</feature>
<feature type="disulfide bond" evidence="4">
    <location>
        <begin position="1043"/>
        <end position="1050"/>
    </location>
</feature>
<feature type="disulfide bond" evidence="4">
    <location>
        <begin position="1052"/>
        <end position="1074"/>
    </location>
</feature>
<feature type="disulfide bond" evidence="4">
    <location>
        <begin position="1078"/>
        <end position="1109"/>
    </location>
</feature>
<feature type="disulfide bond" evidence="4">
    <location>
        <begin position="1127"/>
        <end position="1146"/>
    </location>
</feature>
<feature type="disulfide bond" evidence="4">
    <location>
        <begin position="1150"/>
        <end position="1170"/>
    </location>
</feature>
<feature type="disulfide bond" evidence="4">
    <location>
        <begin position="1182"/>
        <end position="1189"/>
    </location>
</feature>
<feature type="disulfide bond" evidence="4">
    <location>
        <begin position="1191"/>
        <end position="1211"/>
    </location>
</feature>
<feature type="disulfide bond" evidence="2">
    <location>
        <begin position="1216"/>
        <end position="1265"/>
    </location>
</feature>
<feature type="disulfide bond" evidence="2">
    <location>
        <begin position="1232"/>
        <end position="1246"/>
    </location>
</feature>
<feature type="disulfide bond" evidence="2">
    <location>
        <begin position="1306"/>
        <end position="1356"/>
    </location>
</feature>
<feature type="disulfide bond" evidence="2">
    <location>
        <begin position="1331"/>
        <end position="1347"/>
    </location>
</feature>
<feature type="disulfide bond" evidence="2">
    <location>
        <begin position="1441"/>
        <end position="1458"/>
    </location>
</feature>
<feature type="disulfide bond" evidence="2">
    <location>
        <begin position="1461"/>
        <end position="1472"/>
    </location>
</feature>
<feature type="disulfide bond" evidence="2">
    <location>
        <begin position="1475"/>
        <end position="1489"/>
    </location>
</feature>
<feature type="disulfide bond" evidence="2">
    <location>
        <begin position="1492"/>
        <end position="1509"/>
    </location>
</feature>
<feature type="disulfide bond" evidence="4">
    <location>
        <begin position="1513"/>
        <end position="1522"/>
    </location>
</feature>
<feature type="disulfide bond" evidence="4">
    <location>
        <begin position="1542"/>
        <end position="1564"/>
    </location>
</feature>
<feature type="disulfide bond" evidence="2">
    <location>
        <begin position="1602"/>
        <end position="1626"/>
    </location>
</feature>
<feature type="disulfide bond" evidence="2">
    <location>
        <begin position="1606"/>
        <end position="1612"/>
    </location>
</feature>
<feature type="disulfide bond" evidence="2">
    <location>
        <begin position="1638"/>
        <end position="1661"/>
    </location>
</feature>
<feature type="disulfide bond" evidence="2">
    <location>
        <begin position="1723"/>
        <end position="1748"/>
    </location>
</feature>
<feature type="disulfide bond" evidence="2">
    <location>
        <begin position="1727"/>
        <end position="1733"/>
    </location>
</feature>
<feature type="disulfide bond" evidence="2">
    <location>
        <begin position="1732"/>
        <end position="1834"/>
    </location>
</feature>
<feature type="disulfide bond" evidence="2">
    <location>
        <begin position="1759"/>
        <end position="1776"/>
    </location>
</feature>
<feature type="disulfide bond" evidence="2">
    <location>
        <begin position="1890"/>
        <end position="1916"/>
    </location>
</feature>
<feature type="disulfide bond" evidence="2">
    <location>
        <begin position="1894"/>
        <end position="1901"/>
    </location>
</feature>
<feature type="disulfide bond" evidence="2">
    <location>
        <begin position="1925"/>
        <end position="1936"/>
    </location>
</feature>
<feature type="disulfide bond" evidence="2">
    <location>
        <begin position="1993"/>
        <end position="2021"/>
    </location>
</feature>
<feature type="disulfide bond" evidence="2">
    <location>
        <begin position="1997"/>
        <end position="2003"/>
    </location>
</feature>
<feature type="disulfide bond" evidence="2">
    <location>
        <begin position="2002"/>
        <end position="2073"/>
    </location>
</feature>
<feature type="disulfide bond" evidence="2">
    <location>
        <begin position="2032"/>
        <end position="2045"/>
    </location>
</feature>
<feature type="disulfide bond" evidence="2">
    <location>
        <begin position="2128"/>
        <end position="2152"/>
    </location>
</feature>
<feature type="disulfide bond" evidence="2">
    <location>
        <begin position="2132"/>
        <end position="2138"/>
    </location>
</feature>
<feature type="disulfide bond" evidence="2">
    <location>
        <begin position="2161"/>
        <end position="2170"/>
    </location>
</feature>
<feature type="disulfide bond" evidence="4">
    <location>
        <begin position="2263"/>
        <end position="2280"/>
    </location>
</feature>
<feature type="disulfide bond" evidence="2">
    <location>
        <begin position="2441"/>
        <end position="2452"/>
    </location>
</feature>
<feature type="disulfide bond" evidence="2">
    <location>
        <begin position="2590"/>
        <end position="2714"/>
    </location>
</feature>
<feature type="sequence variant" description="In cog; impairs secretion due to ER retention." evidence="9">
    <original>L</original>
    <variation>P</variation>
    <location>
        <position position="2283"/>
    </location>
</feature>
<feature type="mutagenesis site" description="Impairs secretion." evidence="7">
    <original>G</original>
    <variation>R</variation>
    <location>
        <position position="2318"/>
    </location>
</feature>
<feature type="sequence conflict" description="In Ref. 2; AAC32268 and 3; AAC32269." evidence="10" ref="2 3">
    <original>E</original>
    <variation>K</variation>
    <location>
        <position position="80"/>
    </location>
</feature>
<feature type="sequence conflict" description="In Ref. 2; AAC32268 and 3; AAC32269." evidence="10" ref="2 3">
    <original>V</original>
    <variation>I</variation>
    <location>
        <position position="92"/>
    </location>
</feature>
<feature type="sequence conflict" description="In Ref. 1; AAB53204." evidence="10" ref="1">
    <original>A</original>
    <variation>T</variation>
    <location>
        <position position="1327"/>
    </location>
</feature>
<feature type="sequence conflict" description="In Ref. 1; AAB53204." evidence="10" ref="1">
    <original>N</original>
    <variation>S</variation>
    <location>
        <position position="1427"/>
    </location>
</feature>
<feature type="sequence conflict" description="In Ref. 1; AAB53204." evidence="10" ref="1">
    <original>RTQLGCM</original>
    <variation>GLSLDVL</variation>
    <location>
        <begin position="1436"/>
        <end position="1442"/>
    </location>
</feature>
<feature type="sequence conflict" description="In Ref. 1; AAB53204." evidence="10" ref="1">
    <original>T</original>
    <variation>I</variation>
    <location>
        <position position="1721"/>
    </location>
</feature>
<feature type="sequence conflict" description="In Ref. 1; AAB53204." evidence="10" ref="1">
    <original>S</original>
    <variation>T</variation>
    <location>
        <position position="1813"/>
    </location>
</feature>
<feature type="sequence conflict" description="In Ref. 2; AAC32268 and 3; AAC32269." evidence="10" ref="2 3">
    <original>RVK</original>
    <variation>KVN</variation>
    <location>
        <begin position="1957"/>
        <end position="1959"/>
    </location>
</feature>
<feature type="sequence conflict" description="In Ref. 1; AAB53204." evidence="10" ref="1">
    <original>S</original>
    <variation>SS</variation>
    <location>
        <position position="2090"/>
    </location>
</feature>
<feature type="sequence conflict" description="In Ref. 2; AAC32268 and 3; AAC32269." evidence="10" ref="2 3">
    <original>R</original>
    <variation>K</variation>
    <location>
        <position position="2407"/>
    </location>
</feature>
<feature type="sequence conflict" description="In Ref. 2; AAC32268 and 3; AAC32269." evidence="10" ref="2 3">
    <original>G</original>
    <variation>S</variation>
    <location>
        <position position="2414"/>
    </location>
</feature>
<feature type="sequence conflict" description="In Ref. 2; AAC32268 and 3; AAC32269." evidence="10" ref="2 3">
    <original>R</original>
    <variation>K</variation>
    <location>
        <position position="2427"/>
    </location>
</feature>
<feature type="sequence conflict" description="In Ref. 2; AAC32268 and 3; AAC32269." evidence="10" ref="2 3">
    <original>A</original>
    <variation>T</variation>
    <location>
        <position position="2434"/>
    </location>
</feature>
<feature type="sequence conflict" description="In Ref. 2; AAC32268 and 3; AAC32269." evidence="10" ref="2 3">
    <original>TSSIQEVVSCL</original>
    <variation>NFIHPGSGIMF</variation>
    <location>
        <begin position="2443"/>
        <end position="2453"/>
    </location>
</feature>
<feature type="sequence conflict" description="In Ref. 1; AAB53204." evidence="10" ref="1">
    <original>D</original>
    <variation>GN</variation>
    <location>
        <position position="2728"/>
    </location>
</feature>
<name>THYG_MOUSE</name>
<sequence>MTALVLWVSTLLSSVCLVAANIFEYQVDAQPLRPCELQREKAFLKQAEYVPQCSEDGSFQTVQCQNDGQSCWCVDSDGREVPGSRQLGRPTVCLSFCQLHKQRILLGSYINSTDALYLPQCQDSGNYAPVQCDLQRVQCWCVDTEGMEVYGTRQQGRPTRCPRSCEIRNRRLLHGVGDRSPPQCTADGEFMPVQCKFVNTTDMMIFDLIHNYNRFPDAFVTFSSFRGRFPEVSGYCYCADSQGRELAETGLELLLDEIYDTIFAGLDQASTFTQSTMYRILQRRFLAIQLVISGRFRCPTKCEVEQFAATRFGHSYIPRCHRDGHYQTVQCQTEGMCWCVDAQGREVPGTRQQGQPPSCAADQSCALERQQALSRFYFETPDYFSPQDLLSSEDRLAPVSGVRSDTSCPPRIKELFVDSGLLRSIAVEHYQRLSESRSLLREAIRAVFPSRELAGLALQFTTNPKRLQQNLFGGTFLANAAQFNLSGALGTRSTFNFSQFFQQFGLPGFLNRDRVTTLAKLLPVRLDSSSTPETLRVSEKTVAMNKRVVGNFGFKVNLQENQDALKFLVSLLELPEFLVFLQRAVSVPEDIARDLGDVMEMVFSAQACKQMPGKFFVPSCTAGGSYEDIQCYAGECWCVDSRGKELDGSRVRGGRPRCPTKCEKQRAQMQSLASAQPAGSSFFVPTCTREGYFLPVQCFNSECYCVDTEGQVIPGTQSTVGEAKQCPSVCQLQAEQAFLGVVGVLLSNSSMVPSISNVYIPQCSASGQWRHVQCDGPHEQVFEWYERWKTQNGDGQELTPAALLMKIVSYREVASRNFSLFLQSLYDAGQQRIFPVLAQYPSLQDVPQVVLEGATTPPGENIFLDPYIFWQILNGQLSQYPGPYSDFNMPLEHFNLRSCWCVDEAGQKLDGTQTKPGEIPACPGPCEEVKLRVLKFIKETEEIVSASNASSFPLGESFLVAKGIQLTSEELDLPPQFPSRDAFSEKFLRGGEYAIRLAAQSTLTFYQSLRASLGKSDGAASLLWSGPYMPQCNMIGGWEPVQCHAGTGQCWCVDGRGEFIPGSLMSRSSQMPQCPTNCELSRASGLISAWKQAGPQRNPGPGDLFIPVCLQTGEYVRKQTSGTGTWCVDPASGEGMPVNTNGSAQCPGLCDVLKSRALSRKVGLGYSPVCEALDGAFSPVQCDLAQGSCWCVLGSGEEVPGTRVVGTQPACESPQCPLPFSGSDVADGVIFCETASSSGVTTVQQCQLLCRQGLRSAFSPGPLICSLESQHWVTLPPPRACQRPQLWQTMQTQAHFQLLLPPGKMCSVDYSGLLQAFQVFILDELIARGFCQIQVKTFGTLVSSTVCDNSSIQVGCLTAERLGVNVTWKLQLEDISVGSLPDLYSIERAVTGQDLLGRFADLIQSGRFQLHLDSKTFSADTTLYFLNGDSFVTSPRTQLGCMEGFYRVPTTRQDALGCVKCPEGSFSQDGRCTPCPAGTYQEQAGSSACIPCPRGRTTITTGAFSKTHCVTDCQKNEAGLQCDQNGQYQASQKNRDSGEVFCVDSEGRKLQWLQTEAGLSESQCLMIRKFDKAPESKVIFDANSPVIVKSSVPSADSPLVQCLTDCANDEACSFLTVSTMESEVSCDFYSWTRDNFACVTSDQEQDAMGSLKATSFGSLRCQVKVRNSGKDSLAVYVKKGYESTAAGQKSFEPTGFQNVLSGLYSPVVFSASGANLTDTHTYCLLACDNDSCCDGFIITQVKGGPTICGLLSSPDILLCHINDWRDTSATQANATCAGVTYDQGSRQMTLSLGGQEFLQGLALLEGTQDSFTSFQQVYLWKDSDMGSRPESMGCERGMVPRSDFPGDMATELFSPVDITQVIVNTSHSLPSQQYWLFTHLFSAEQANLWCLSRCAQEPIFCQLADITKSSSLYFTCFLYPEAQVCDNVMESNAKNCSQILPHQPTALFRRKVVLNDRVKNFYTRLPFQKLTGISIRDKVPMSGKLISNGFFECERLCDRDPCCTGFGFLNVSQLQGGEVTCLTLNSMGIQTCNEESGATWRILDCGSEDTEVHTYPFGWYQKPAVWSDTPSFCPSAALQSLTEEKVTSDSWQTLALSSVIVDPSIKHFDVAHISTAATSNFSMAQDFCLQQCSRHQDCLVTTLQIQPGVVRCVFYPDIQNCIHSLRSHTCWLLLHEEATYIYRKSGIPLVQSDVTSTPSVRIDSFGQLQGGSQVIKVGTAWKQVYRFLGVPYAAPPLADNRFRAPEVLNWTGSWDATKPRASCWQPGTRTPTPPQINEDCLYLNVFVPENLVSNASVLVFFHNTMEMEGSGGQLTIDGSILAAVGNFIVVTANYRLGVFGFLSSGSDEVAGNWGLLDQVAALTWVQSHIGAFGGDPQRVTLAADRSGADVASIHLLISRPTRLQLFRKALLMGGSALSPAAIISPERAQQQAAALAKEVGCPTSSIQEVVSCLRQKPANILNDAQTKLLAVSGPFHYWGPVVDGQYLRELPSRRLKRPLPVKVDLLIGGSQDDGLINRAKAVKQFEESQGRTNSKTAFYQALQNSLGGEDSDARILAAAVWYYSLEHSTDDYASFSRALENATRDYFIICPMVNMASLWARRTRGNVFMYHVPESYGHGSLELLADVQYAFGLPFYSAYQGQFSTEEQSLSLKVMQYFSNFIRSGNPNYPHEFSRKAAEFATPWPDFIPGAGGESYKELSAQLPNRQGLKQADCSFWSKYIQTLKDADGAKDAQLTKSEEEDLEVGPGLEEDLSGSLEPVPKSYSK</sequence>
<reference key="1">
    <citation type="journal article" date="1997" name="Clin. Immunol. Immunopathol.">
        <title>Cloning and characterization of murine thyroglobulin cDNA.</title>
        <authorList>
            <person name="Caturegli P."/>
            <person name="Vidalain P.O."/>
            <person name="Vali M."/>
            <person name="Aguilera-Galaviz L.A."/>
            <person name="Rose N.R."/>
        </authorList>
    </citation>
    <scope>NUCLEOTIDE SEQUENCE [MRNA]</scope>
</reference>
<reference key="2">
    <citation type="journal article" date="1998" name="Proc. Natl. Acad. Sci. U.S.A.">
        <title>A single amino acid change in the acetylcholinesterase-like domain of thyroglobulin causes congenital goiter with hypothyroidism in the cog/cog mouse: a model of human endoplasmic reticulum storage diseases.</title>
        <authorList>
            <person name="Kim P.S."/>
            <person name="Hossain S.A."/>
            <person name="Park Y.-N."/>
            <person name="Lee I."/>
            <person name="Yoo S.-E."/>
            <person name="Arvan P."/>
        </authorList>
    </citation>
    <scope>NUCLEOTIDE SEQUENCE [MRNA]</scope>
    <scope>VARIANT COG PRO-2283</scope>
    <source>
        <strain>COG</strain>
        <tissue>Thyroid</tissue>
    </source>
</reference>
<reference key="3">
    <citation type="submission" date="1998-07" db="EMBL/GenBank/DDBJ databases">
        <title>Cloning, characterization, site-directed mutagenesis, and transient expression of 8301-nucleotide AKR/J mouse thyroglobulin cDNA: defective secretion of mutant thyroglobulins.</title>
        <authorList>
            <person name="Hossain S.A."/>
            <person name="Yoo S.-E."/>
            <person name="Kim P.S."/>
        </authorList>
    </citation>
    <scope>NUCLEOTIDE SEQUENCE [MRNA]</scope>
    <source>
        <strain>AKR/J</strain>
        <tissue>Thyroid</tissue>
    </source>
</reference>
<reference key="4">
    <citation type="submission" date="2005-07" db="EMBL/GenBank/DDBJ databases">
        <authorList>
            <person name="Mural R.J."/>
            <person name="Adams M.D."/>
            <person name="Myers E.W."/>
            <person name="Smith H.O."/>
            <person name="Venter J.C."/>
        </authorList>
    </citation>
    <scope>NUCLEOTIDE SEQUENCE [LARGE SCALE GENOMIC DNA]</scope>
</reference>
<reference key="5">
    <citation type="journal article" date="2004" name="Genome Res.">
        <title>The status, quality, and expansion of the NIH full-length cDNA project: the Mammalian Gene Collection (MGC).</title>
        <authorList>
            <consortium name="The MGC Project Team"/>
        </authorList>
    </citation>
    <scope>NUCLEOTIDE SEQUENCE [LARGE SCALE MRNA]</scope>
    <source>
        <tissue>Thyroid</tissue>
    </source>
</reference>
<reference key="6">
    <citation type="journal article" date="2003" name="J. Clin. Invest.">
        <title>Thyroid functions of mouse cathepsins B, K, and L.</title>
        <authorList>
            <person name="Friedrichs B."/>
            <person name="Tepel C."/>
            <person name="Reinheckel T."/>
            <person name="Deussing J."/>
            <person name="von Figura K."/>
            <person name="Herzog V."/>
            <person name="Peters C."/>
            <person name="Saftig P."/>
            <person name="Brix K."/>
        </authorList>
    </citation>
    <scope>FUNCTION</scope>
    <scope>SUBUNIT</scope>
    <scope>SUBCELLULAR LOCATION</scope>
    <scope>TISSUE SPECIFICITY</scope>
    <scope>PROTEOLYTIC CLEAVAGE</scope>
</reference>
<reference key="7">
    <citation type="journal article" date="2009" name="J. Biol. Chem.">
        <title>The cholinesterase-like domain, essential in thyroglobulin trafficking for thyroid hormone synthesis, is required for protein dimerization.</title>
        <authorList>
            <person name="Lee J."/>
            <person name="Wang X."/>
            <person name="Di Jeso B."/>
            <person name="Arvan P."/>
        </authorList>
    </citation>
    <scope>SUBUNIT</scope>
    <scope>SUBCELLULAR LOCATION</scope>
    <scope>CHOLINESTERASE-LIKE REGION</scope>
    <scope>DISULFIDE BOND</scope>
    <scope>MUTAGENESIS OF GLY-2318</scope>
</reference>
<reference key="8">
    <citation type="journal article" date="1987" name="Endocrinology">
        <title>Inherited congenital goiter in mice.</title>
        <authorList>
            <person name="Beamer W.G."/>
            <person name="Maltais L.J."/>
            <person name="DeBaets M.H."/>
            <person name="Eicher E.M."/>
        </authorList>
    </citation>
    <scope>INVOLVEMENT IN COG DISEASE</scope>
</reference>
<evidence type="ECO:0000250" key="1">
    <source>
        <dbReference type="UniProtKB" id="F1RRV3"/>
    </source>
</evidence>
<evidence type="ECO:0000250" key="2">
    <source>
        <dbReference type="UniProtKB" id="P01266"/>
    </source>
</evidence>
<evidence type="ECO:0000255" key="3"/>
<evidence type="ECO:0000255" key="4">
    <source>
        <dbReference type="PROSITE-ProRule" id="PRU00500"/>
    </source>
</evidence>
<evidence type="ECO:0000256" key="5">
    <source>
        <dbReference type="SAM" id="MobiDB-lite"/>
    </source>
</evidence>
<evidence type="ECO:0000269" key="6">
    <source>
    </source>
</evidence>
<evidence type="ECO:0000269" key="7">
    <source>
    </source>
</evidence>
<evidence type="ECO:0000269" key="8">
    <source>
    </source>
</evidence>
<evidence type="ECO:0000269" key="9">
    <source>
    </source>
</evidence>
<evidence type="ECO:0000305" key="10"/>
<evidence type="ECO:0000305" key="11">
    <source>
    </source>
</evidence>
<evidence type="ECO:0000305" key="12">
    <source>
    </source>
</evidence>
<keyword id="KW-0225">Disease variant</keyword>
<keyword id="KW-1015">Disulfide bond</keyword>
<keyword id="KW-0325">Glycoprotein</keyword>
<keyword id="KW-0372">Hormone</keyword>
<keyword id="KW-0405">Iodination</keyword>
<keyword id="KW-1185">Reference proteome</keyword>
<keyword id="KW-0677">Repeat</keyword>
<keyword id="KW-0964">Secreted</keyword>
<keyword id="KW-0732">Signal</keyword>
<keyword id="KW-0765">Sulfation</keyword>
<keyword id="KW-0795">Thyroid hormone</keyword>
<keyword id="KW-0893">Thyroid hormones biosynthesis</keyword>
<gene>
    <name type="primary">Tg</name>
    <name type="synonym">Tgn</name>
</gene>
<protein>
    <recommendedName>
        <fullName>Thyroglobulin</fullName>
        <shortName>Tg</shortName>
    </recommendedName>
</protein>